<sequence>MSSLLLFNDKSRALQADIVAVQSQVVYGSVGNSIAVPAIKQNGLNVFAVPTVLLSNTPHYDTFYGGAIPDEWFSGYLRALQERDALRQLRAVTTGYMGTASQIKILAEWLTALRKDHPDLLIMVDPVIGDIDSGIYVKPDLPEAYRQYLLPLAQGITPNIFELEILTGKNCRDLDSAIAAAKSLLSDTLKWVVITSASGNEENQEMQVVVVSADSVNVISHSRVKTDLKGTGDLFCAQLISGLLKGKELTDAVHSAGLRVLEVMRYTQQYDSDELILPPLAEA</sequence>
<feature type="chain" id="PRO_1000186809" description="Pyridoxine/pyridoxal/pyridoxamine kinase">
    <location>
        <begin position="1"/>
        <end position="283"/>
    </location>
</feature>
<feature type="binding site" evidence="1">
    <location>
        <position position="23"/>
    </location>
    <ligand>
        <name>substrate</name>
    </ligand>
</feature>
<feature type="binding site" evidence="1">
    <location>
        <position position="59"/>
    </location>
    <ligand>
        <name>substrate</name>
    </ligand>
</feature>
<feature type="binding site" evidence="1">
    <location>
        <position position="125"/>
    </location>
    <ligand>
        <name>ATP</name>
        <dbReference type="ChEBI" id="CHEBI:30616"/>
    </ligand>
</feature>
<feature type="binding site" evidence="1">
    <location>
        <position position="136"/>
    </location>
    <ligand>
        <name>Mg(2+)</name>
        <dbReference type="ChEBI" id="CHEBI:18420"/>
    </ligand>
</feature>
<feature type="binding site" evidence="1">
    <location>
        <position position="157"/>
    </location>
    <ligand>
        <name>ATP</name>
        <dbReference type="ChEBI" id="CHEBI:30616"/>
    </ligand>
</feature>
<feature type="binding site" evidence="1">
    <location>
        <position position="162"/>
    </location>
    <ligand>
        <name>ATP</name>
        <dbReference type="ChEBI" id="CHEBI:30616"/>
    </ligand>
</feature>
<feature type="binding site" evidence="1">
    <location>
        <position position="162"/>
    </location>
    <ligand>
        <name>Mg(2+)</name>
        <dbReference type="ChEBI" id="CHEBI:18420"/>
    </ligand>
</feature>
<feature type="binding site" evidence="1">
    <location>
        <position position="195"/>
    </location>
    <ligand>
        <name>ATP</name>
        <dbReference type="ChEBI" id="CHEBI:30616"/>
    </ligand>
</feature>
<feature type="binding site" evidence="1">
    <location>
        <begin position="221"/>
        <end position="224"/>
    </location>
    <ligand>
        <name>ATP</name>
        <dbReference type="ChEBI" id="CHEBI:30616"/>
    </ligand>
</feature>
<feature type="binding site" evidence="1">
    <location>
        <position position="231"/>
    </location>
    <ligand>
        <name>ATP</name>
        <dbReference type="ChEBI" id="CHEBI:30616"/>
    </ligand>
</feature>
<feature type="binding site" evidence="1">
    <location>
        <position position="233"/>
    </location>
    <ligand>
        <name>substrate</name>
    </ligand>
</feature>
<reference key="1">
    <citation type="journal article" date="2009" name="PLoS Genet.">
        <title>Organised genome dynamics in the Escherichia coli species results in highly diverse adaptive paths.</title>
        <authorList>
            <person name="Touchon M."/>
            <person name="Hoede C."/>
            <person name="Tenaillon O."/>
            <person name="Barbe V."/>
            <person name="Baeriswyl S."/>
            <person name="Bidet P."/>
            <person name="Bingen E."/>
            <person name="Bonacorsi S."/>
            <person name="Bouchier C."/>
            <person name="Bouvet O."/>
            <person name="Calteau A."/>
            <person name="Chiapello H."/>
            <person name="Clermont O."/>
            <person name="Cruveiller S."/>
            <person name="Danchin A."/>
            <person name="Diard M."/>
            <person name="Dossat C."/>
            <person name="Karoui M.E."/>
            <person name="Frapy E."/>
            <person name="Garry L."/>
            <person name="Ghigo J.M."/>
            <person name="Gilles A.M."/>
            <person name="Johnson J."/>
            <person name="Le Bouguenec C."/>
            <person name="Lescat M."/>
            <person name="Mangenot S."/>
            <person name="Martinez-Jehanne V."/>
            <person name="Matic I."/>
            <person name="Nassif X."/>
            <person name="Oztas S."/>
            <person name="Petit M.A."/>
            <person name="Pichon C."/>
            <person name="Rouy Z."/>
            <person name="Ruf C.S."/>
            <person name="Schneider D."/>
            <person name="Tourret J."/>
            <person name="Vacherie B."/>
            <person name="Vallenet D."/>
            <person name="Medigue C."/>
            <person name="Rocha E.P.C."/>
            <person name="Denamur E."/>
        </authorList>
    </citation>
    <scope>NUCLEOTIDE SEQUENCE [LARGE SCALE GENOMIC DNA]</scope>
    <source>
        <strain>ATCC 35469 / DSM 13698 / BCRC 15582 / CCUG 18766 / IAM 14443 / JCM 21226 / LMG 7866 / NBRC 102419 / NCTC 12128 / CDC 0568-73</strain>
    </source>
</reference>
<accession>B7LL66</accession>
<proteinExistence type="inferred from homology"/>
<keyword id="KW-0067">ATP-binding</keyword>
<keyword id="KW-0418">Kinase</keyword>
<keyword id="KW-0460">Magnesium</keyword>
<keyword id="KW-0479">Metal-binding</keyword>
<keyword id="KW-0547">Nucleotide-binding</keyword>
<keyword id="KW-0808">Transferase</keyword>
<keyword id="KW-0862">Zinc</keyword>
<organism>
    <name type="scientific">Escherichia fergusonii (strain ATCC 35469 / DSM 13698 / CCUG 18766 / IAM 14443 / JCM 21226 / LMG 7866 / NBRC 102419 / NCTC 12128 / CDC 0568-73)</name>
    <dbReference type="NCBI Taxonomy" id="585054"/>
    <lineage>
        <taxon>Bacteria</taxon>
        <taxon>Pseudomonadati</taxon>
        <taxon>Pseudomonadota</taxon>
        <taxon>Gammaproteobacteria</taxon>
        <taxon>Enterobacterales</taxon>
        <taxon>Enterobacteriaceae</taxon>
        <taxon>Escherichia</taxon>
    </lineage>
</organism>
<protein>
    <recommendedName>
        <fullName evidence="1">Pyridoxine/pyridoxal/pyridoxamine kinase</fullName>
        <shortName evidence="1">PN/PL/PM kinase</shortName>
        <ecNumber evidence="1">2.7.1.35</ecNumber>
    </recommendedName>
    <alternativeName>
        <fullName evidence="1">B6-vitamer kinase</fullName>
    </alternativeName>
</protein>
<dbReference type="EC" id="2.7.1.35" evidence="1"/>
<dbReference type="EMBL" id="CU928158">
    <property type="protein sequence ID" value="CAQ88294.1"/>
    <property type="molecule type" value="Genomic_DNA"/>
</dbReference>
<dbReference type="RefSeq" id="WP_000096664.1">
    <property type="nucleotide sequence ID" value="NC_011740.1"/>
</dbReference>
<dbReference type="SMR" id="B7LL66"/>
<dbReference type="GeneID" id="75058189"/>
<dbReference type="KEGG" id="efe:EFER_0754"/>
<dbReference type="HOGENOM" id="CLU_046496_3_1_6"/>
<dbReference type="OrthoDB" id="9800808at2"/>
<dbReference type="UniPathway" id="UPA01068">
    <property type="reaction ID" value="UER00298"/>
</dbReference>
<dbReference type="UniPathway" id="UPA01068">
    <property type="reaction ID" value="UER00299"/>
</dbReference>
<dbReference type="UniPathway" id="UPA01068">
    <property type="reaction ID" value="UER00300"/>
</dbReference>
<dbReference type="Proteomes" id="UP000000745">
    <property type="component" value="Chromosome"/>
</dbReference>
<dbReference type="GO" id="GO:0005829">
    <property type="term" value="C:cytosol"/>
    <property type="evidence" value="ECO:0007669"/>
    <property type="project" value="TreeGrafter"/>
</dbReference>
<dbReference type="GO" id="GO:0005524">
    <property type="term" value="F:ATP binding"/>
    <property type="evidence" value="ECO:0007669"/>
    <property type="project" value="UniProtKB-UniRule"/>
</dbReference>
<dbReference type="GO" id="GO:0008902">
    <property type="term" value="F:hydroxymethylpyrimidine kinase activity"/>
    <property type="evidence" value="ECO:0007669"/>
    <property type="project" value="TreeGrafter"/>
</dbReference>
<dbReference type="GO" id="GO:0000287">
    <property type="term" value="F:magnesium ion binding"/>
    <property type="evidence" value="ECO:0007669"/>
    <property type="project" value="UniProtKB-UniRule"/>
</dbReference>
<dbReference type="GO" id="GO:0008478">
    <property type="term" value="F:pyridoxal kinase activity"/>
    <property type="evidence" value="ECO:0007669"/>
    <property type="project" value="UniProtKB-UniRule"/>
</dbReference>
<dbReference type="GO" id="GO:0008270">
    <property type="term" value="F:zinc ion binding"/>
    <property type="evidence" value="ECO:0007669"/>
    <property type="project" value="UniProtKB-UniRule"/>
</dbReference>
<dbReference type="GO" id="GO:0009443">
    <property type="term" value="P:pyridoxal 5'-phosphate salvage"/>
    <property type="evidence" value="ECO:0007669"/>
    <property type="project" value="UniProtKB-UniRule"/>
</dbReference>
<dbReference type="CDD" id="cd01173">
    <property type="entry name" value="pyridoxal_pyridoxamine_kinase"/>
    <property type="match status" value="1"/>
</dbReference>
<dbReference type="FunFam" id="3.40.1190.20:FF:000009">
    <property type="entry name" value="Pyridoxine/pyridoxal/pyridoxamine kinase"/>
    <property type="match status" value="1"/>
</dbReference>
<dbReference type="Gene3D" id="3.40.1190.20">
    <property type="match status" value="1"/>
</dbReference>
<dbReference type="HAMAP" id="MF_01638">
    <property type="entry name" value="PdxK"/>
    <property type="match status" value="1"/>
</dbReference>
<dbReference type="InterPro" id="IPR023479">
    <property type="entry name" value="PdxK"/>
</dbReference>
<dbReference type="InterPro" id="IPR013749">
    <property type="entry name" value="PM/HMP-P_kinase-1"/>
</dbReference>
<dbReference type="InterPro" id="IPR004625">
    <property type="entry name" value="PyrdxlKinase"/>
</dbReference>
<dbReference type="InterPro" id="IPR029056">
    <property type="entry name" value="Ribokinase-like"/>
</dbReference>
<dbReference type="NCBIfam" id="NF006034">
    <property type="entry name" value="PRK08176.1"/>
    <property type="match status" value="1"/>
</dbReference>
<dbReference type="NCBIfam" id="TIGR00687">
    <property type="entry name" value="pyridox_kin"/>
    <property type="match status" value="1"/>
</dbReference>
<dbReference type="PANTHER" id="PTHR10534">
    <property type="entry name" value="PYRIDOXAL KINASE"/>
    <property type="match status" value="1"/>
</dbReference>
<dbReference type="PANTHER" id="PTHR10534:SF15">
    <property type="entry name" value="PYRIDOXINE_PYRIDOXAL_PYRIDOXAMINE KINASE"/>
    <property type="match status" value="1"/>
</dbReference>
<dbReference type="Pfam" id="PF08543">
    <property type="entry name" value="Phos_pyr_kin"/>
    <property type="match status" value="1"/>
</dbReference>
<dbReference type="SUPFAM" id="SSF53613">
    <property type="entry name" value="Ribokinase-like"/>
    <property type="match status" value="1"/>
</dbReference>
<gene>
    <name evidence="1" type="primary">pdxK</name>
    <name type="ordered locus">EFER_0754</name>
</gene>
<evidence type="ECO:0000255" key="1">
    <source>
        <dbReference type="HAMAP-Rule" id="MF_01638"/>
    </source>
</evidence>
<name>PDXK_ESCF3</name>
<comment type="function">
    <text evidence="1">B6-vitamer kinase involved in the salvage pathway of pyridoxal 5'-phosphate (PLP). Catalyzes the phosphorylation of pyridoxine (PN), pyridoxal (PL), and pyridoxamine (PM), forming their respective 5'-phosphorylated esters, i.e. PNP, PLP and PMP.</text>
</comment>
<comment type="catalytic activity">
    <reaction evidence="1">
        <text>pyridoxal + ATP = pyridoxal 5'-phosphate + ADP + H(+)</text>
        <dbReference type="Rhea" id="RHEA:10224"/>
        <dbReference type="ChEBI" id="CHEBI:15378"/>
        <dbReference type="ChEBI" id="CHEBI:17310"/>
        <dbReference type="ChEBI" id="CHEBI:30616"/>
        <dbReference type="ChEBI" id="CHEBI:456216"/>
        <dbReference type="ChEBI" id="CHEBI:597326"/>
        <dbReference type="EC" id="2.7.1.35"/>
    </reaction>
</comment>
<comment type="catalytic activity">
    <reaction evidence="1">
        <text>pyridoxine + ATP = pyridoxine 5'-phosphate + ADP + H(+)</text>
        <dbReference type="Rhea" id="RHEA:25108"/>
        <dbReference type="ChEBI" id="CHEBI:15378"/>
        <dbReference type="ChEBI" id="CHEBI:16709"/>
        <dbReference type="ChEBI" id="CHEBI:30616"/>
        <dbReference type="ChEBI" id="CHEBI:58589"/>
        <dbReference type="ChEBI" id="CHEBI:456216"/>
        <dbReference type="EC" id="2.7.1.35"/>
    </reaction>
</comment>
<comment type="catalytic activity">
    <reaction evidence="1">
        <text>pyridoxamine + ATP = pyridoxamine 5'-phosphate + ADP + H(+)</text>
        <dbReference type="Rhea" id="RHEA:25104"/>
        <dbReference type="ChEBI" id="CHEBI:15378"/>
        <dbReference type="ChEBI" id="CHEBI:30616"/>
        <dbReference type="ChEBI" id="CHEBI:57761"/>
        <dbReference type="ChEBI" id="CHEBI:58451"/>
        <dbReference type="ChEBI" id="CHEBI:456216"/>
        <dbReference type="EC" id="2.7.1.35"/>
    </reaction>
</comment>
<comment type="cofactor">
    <cofactor evidence="1">
        <name>Mg(2+)</name>
        <dbReference type="ChEBI" id="CHEBI:18420"/>
    </cofactor>
</comment>
<comment type="pathway">
    <text evidence="1">Cofactor metabolism; pyridoxal 5'-phosphate salvage; pyridoxal 5'-phosphate from pyridoxal: step 1/1.</text>
</comment>
<comment type="pathway">
    <text evidence="1">Cofactor metabolism; pyridoxal 5'-phosphate salvage; pyridoxine 5'-phosphate from pyridoxine: step 1/1.</text>
</comment>
<comment type="pathway">
    <text evidence="1">Cofactor metabolism; pyridoxal 5'-phosphate salvage; pyridoxamine 5'-phosphate from pyridoxamine: step 1/1.</text>
</comment>
<comment type="subunit">
    <text evidence="1">Homodimer.</text>
</comment>
<comment type="similarity">
    <text evidence="1">Belongs to the pyridoxine kinase family. PdxK subfamily.</text>
</comment>